<comment type="catalytic activity">
    <reaction evidence="1">
        <text>tRNA(Arg) + L-arginine + ATP = L-arginyl-tRNA(Arg) + AMP + diphosphate</text>
        <dbReference type="Rhea" id="RHEA:20301"/>
        <dbReference type="Rhea" id="RHEA-COMP:9658"/>
        <dbReference type="Rhea" id="RHEA-COMP:9673"/>
        <dbReference type="ChEBI" id="CHEBI:30616"/>
        <dbReference type="ChEBI" id="CHEBI:32682"/>
        <dbReference type="ChEBI" id="CHEBI:33019"/>
        <dbReference type="ChEBI" id="CHEBI:78442"/>
        <dbReference type="ChEBI" id="CHEBI:78513"/>
        <dbReference type="ChEBI" id="CHEBI:456215"/>
        <dbReference type="EC" id="6.1.1.19"/>
    </reaction>
</comment>
<comment type="subunit">
    <text evidence="1">Monomer.</text>
</comment>
<comment type="subcellular location">
    <subcellularLocation>
        <location evidence="1">Cytoplasm</location>
    </subcellularLocation>
</comment>
<comment type="similarity">
    <text evidence="1">Belongs to the class-I aminoacyl-tRNA synthetase family.</text>
</comment>
<protein>
    <recommendedName>
        <fullName evidence="1">Arginine--tRNA ligase</fullName>
        <ecNumber evidence="1">6.1.1.19</ecNumber>
    </recommendedName>
    <alternativeName>
        <fullName evidence="1">Arginyl-tRNA synthetase</fullName>
        <shortName evidence="1">ArgRS</shortName>
    </alternativeName>
</protein>
<evidence type="ECO:0000255" key="1">
    <source>
        <dbReference type="HAMAP-Rule" id="MF_00123"/>
    </source>
</evidence>
<proteinExistence type="inferred from homology"/>
<gene>
    <name evidence="1" type="primary">argS</name>
    <name type="ordered locus">MYCGA0120</name>
    <name type="ORF">MGA_0636</name>
</gene>
<keyword id="KW-0030">Aminoacyl-tRNA synthetase</keyword>
<keyword id="KW-0067">ATP-binding</keyword>
<keyword id="KW-0963">Cytoplasm</keyword>
<keyword id="KW-0436">Ligase</keyword>
<keyword id="KW-0547">Nucleotide-binding</keyword>
<keyword id="KW-0648">Protein biosynthesis</keyword>
<keyword id="KW-1185">Reference proteome</keyword>
<reference key="1">
    <citation type="journal article" date="2003" name="Microbiology">
        <title>The complete genome sequence of the avian pathogen Mycoplasma gallisepticum strain R(low).</title>
        <authorList>
            <person name="Papazisi L."/>
            <person name="Gorton T.S."/>
            <person name="Kutish G."/>
            <person name="Markham P.F."/>
            <person name="Browning G.F."/>
            <person name="Nguyen D.K."/>
            <person name="Swartzell S."/>
            <person name="Madan A."/>
            <person name="Mahairas G."/>
            <person name="Geary S.J."/>
        </authorList>
    </citation>
    <scope>NUCLEOTIDE SEQUENCE [LARGE SCALE GENOMIC DNA]</scope>
    <source>
        <strain>R(low / passage 15 / clone 2)</strain>
    </source>
</reference>
<name>SYR_MYCGA</name>
<feature type="chain" id="PRO_0000151575" description="Arginine--tRNA ligase">
    <location>
        <begin position="1"/>
        <end position="549"/>
    </location>
</feature>
<feature type="short sequence motif" description="'HIGH' region">
    <location>
        <begin position="122"/>
        <end position="132"/>
    </location>
</feature>
<sequence length="549" mass="63613">MVFKKIKTQIDHALKQLNLPTDVEYLIQQTKNIQFGDFSSNVAMVLSKRQNKNPQEIAKQIIEQLNPNEFEKITFSKPGFINFFLSNQDKLVVLKRLQETNYSVEKLPKEEQESINIEFVSANPTGFLHLGHVRNAYTGDVLSNILRAVGHNVTKEYWINDLGNQVSLFALSTIIRYLQELGINKYELPDDSYHGKEPIFVAEEMIKDFGNKYQDIKIEDNKIVDSKIANELTQYCTNKMLHFIKQDLESIGVKMDVWTSEKVVYQSNTLTELLNNQLKDHIYEQDGAVWLRTTDGGDDKDRVIIKENKQPTYYGTDIANHYLKHKRGFDRLINVWGADHFGHILRTAYAAELTGIKKGKFVVVLIEMVKLLKDNKEIKFSKRLGNAISIPDMLEFLSKDASRWFMLNQSWTSGIRIDVDLTNKKDSSNPVYYVQYAHARIHKLLTKAEHIDLNKVNLSLLNSDVERTMVNYLASFEHYVHNVATTYEVNKLLNFVYTLTQSFHSWYNSHEILNQKDEIKQTRLLLAKAIKNLINYLLSLFGIEAVEQM</sequence>
<dbReference type="EC" id="6.1.1.19" evidence="1"/>
<dbReference type="EMBL" id="AE015450">
    <property type="protein sequence ID" value="AAP56362.2"/>
    <property type="molecule type" value="Genomic_DNA"/>
</dbReference>
<dbReference type="RefSeq" id="WP_011113241.1">
    <property type="nucleotide sequence ID" value="NC_004829.2"/>
</dbReference>
<dbReference type="SMR" id="Q7NC67"/>
<dbReference type="GeneID" id="93509833"/>
<dbReference type="KEGG" id="mga:MGA_0636"/>
<dbReference type="PATRIC" id="fig|233150.7.peg.14"/>
<dbReference type="HOGENOM" id="CLU_006406_0_1_14"/>
<dbReference type="OrthoDB" id="9805987at2"/>
<dbReference type="Proteomes" id="UP000001418">
    <property type="component" value="Chromosome"/>
</dbReference>
<dbReference type="GO" id="GO:0005737">
    <property type="term" value="C:cytoplasm"/>
    <property type="evidence" value="ECO:0007669"/>
    <property type="project" value="UniProtKB-SubCell"/>
</dbReference>
<dbReference type="GO" id="GO:0004814">
    <property type="term" value="F:arginine-tRNA ligase activity"/>
    <property type="evidence" value="ECO:0007669"/>
    <property type="project" value="UniProtKB-UniRule"/>
</dbReference>
<dbReference type="GO" id="GO:0005524">
    <property type="term" value="F:ATP binding"/>
    <property type="evidence" value="ECO:0007669"/>
    <property type="project" value="UniProtKB-UniRule"/>
</dbReference>
<dbReference type="GO" id="GO:0006420">
    <property type="term" value="P:arginyl-tRNA aminoacylation"/>
    <property type="evidence" value="ECO:0007669"/>
    <property type="project" value="UniProtKB-UniRule"/>
</dbReference>
<dbReference type="CDD" id="cd00671">
    <property type="entry name" value="ArgRS_core"/>
    <property type="match status" value="1"/>
</dbReference>
<dbReference type="Gene3D" id="3.30.1360.70">
    <property type="entry name" value="Arginyl tRNA synthetase N-terminal domain"/>
    <property type="match status" value="1"/>
</dbReference>
<dbReference type="Gene3D" id="3.40.50.620">
    <property type="entry name" value="HUPs"/>
    <property type="match status" value="1"/>
</dbReference>
<dbReference type="Gene3D" id="1.10.730.10">
    <property type="entry name" value="Isoleucyl-tRNA Synthetase, Domain 1"/>
    <property type="match status" value="1"/>
</dbReference>
<dbReference type="HAMAP" id="MF_00123">
    <property type="entry name" value="Arg_tRNA_synth"/>
    <property type="match status" value="1"/>
</dbReference>
<dbReference type="InterPro" id="IPR001412">
    <property type="entry name" value="aa-tRNA-synth_I_CS"/>
</dbReference>
<dbReference type="InterPro" id="IPR001278">
    <property type="entry name" value="Arg-tRNA-ligase"/>
</dbReference>
<dbReference type="InterPro" id="IPR005148">
    <property type="entry name" value="Arg-tRNA-synth_N"/>
</dbReference>
<dbReference type="InterPro" id="IPR036695">
    <property type="entry name" value="Arg-tRNA-synth_N_sf"/>
</dbReference>
<dbReference type="InterPro" id="IPR035684">
    <property type="entry name" value="ArgRS_core"/>
</dbReference>
<dbReference type="InterPro" id="IPR008909">
    <property type="entry name" value="DALR_anticod-bd"/>
</dbReference>
<dbReference type="InterPro" id="IPR014729">
    <property type="entry name" value="Rossmann-like_a/b/a_fold"/>
</dbReference>
<dbReference type="InterPro" id="IPR009080">
    <property type="entry name" value="tRNAsynth_Ia_anticodon-bd"/>
</dbReference>
<dbReference type="NCBIfam" id="TIGR00456">
    <property type="entry name" value="argS"/>
    <property type="match status" value="1"/>
</dbReference>
<dbReference type="PANTHER" id="PTHR11956:SF5">
    <property type="entry name" value="ARGININE--TRNA LIGASE, CYTOPLASMIC"/>
    <property type="match status" value="1"/>
</dbReference>
<dbReference type="PANTHER" id="PTHR11956">
    <property type="entry name" value="ARGINYL-TRNA SYNTHETASE"/>
    <property type="match status" value="1"/>
</dbReference>
<dbReference type="Pfam" id="PF03485">
    <property type="entry name" value="Arg_tRNA_synt_N"/>
    <property type="match status" value="1"/>
</dbReference>
<dbReference type="Pfam" id="PF05746">
    <property type="entry name" value="DALR_1"/>
    <property type="match status" value="1"/>
</dbReference>
<dbReference type="Pfam" id="PF00750">
    <property type="entry name" value="tRNA-synt_1d"/>
    <property type="match status" value="1"/>
</dbReference>
<dbReference type="PRINTS" id="PR01038">
    <property type="entry name" value="TRNASYNTHARG"/>
</dbReference>
<dbReference type="SMART" id="SM01016">
    <property type="entry name" value="Arg_tRNA_synt_N"/>
    <property type="match status" value="1"/>
</dbReference>
<dbReference type="SMART" id="SM00836">
    <property type="entry name" value="DALR_1"/>
    <property type="match status" value="1"/>
</dbReference>
<dbReference type="SUPFAM" id="SSF47323">
    <property type="entry name" value="Anticodon-binding domain of a subclass of class I aminoacyl-tRNA synthetases"/>
    <property type="match status" value="1"/>
</dbReference>
<dbReference type="SUPFAM" id="SSF55190">
    <property type="entry name" value="Arginyl-tRNA synthetase (ArgRS), N-terminal 'additional' domain"/>
    <property type="match status" value="1"/>
</dbReference>
<dbReference type="SUPFAM" id="SSF52374">
    <property type="entry name" value="Nucleotidylyl transferase"/>
    <property type="match status" value="1"/>
</dbReference>
<dbReference type="PROSITE" id="PS00178">
    <property type="entry name" value="AA_TRNA_LIGASE_I"/>
    <property type="match status" value="1"/>
</dbReference>
<accession>Q7NC67</accession>
<organism>
    <name type="scientific">Mycoplasmoides gallisepticum (strain R(low / passage 15 / clone 2))</name>
    <name type="common">Mycoplasma gallisepticum</name>
    <dbReference type="NCBI Taxonomy" id="710127"/>
    <lineage>
        <taxon>Bacteria</taxon>
        <taxon>Bacillati</taxon>
        <taxon>Mycoplasmatota</taxon>
        <taxon>Mycoplasmoidales</taxon>
        <taxon>Mycoplasmoidaceae</taxon>
        <taxon>Mycoplasmoides</taxon>
    </lineage>
</organism>